<protein>
    <recommendedName>
        <fullName evidence="1">Transcriptional repressor NrdR</fullName>
    </recommendedName>
</protein>
<comment type="function">
    <text evidence="1">Negatively regulates transcription of bacterial ribonucleotide reductase nrd genes and operons by binding to NrdR-boxes.</text>
</comment>
<comment type="cofactor">
    <cofactor evidence="1">
        <name>Zn(2+)</name>
        <dbReference type="ChEBI" id="CHEBI:29105"/>
    </cofactor>
    <text evidence="1">Binds 1 zinc ion.</text>
</comment>
<comment type="similarity">
    <text evidence="1">Belongs to the NrdR family.</text>
</comment>
<proteinExistence type="inferred from homology"/>
<evidence type="ECO:0000255" key="1">
    <source>
        <dbReference type="HAMAP-Rule" id="MF_00440"/>
    </source>
</evidence>
<gene>
    <name evidence="1" type="primary">nrdR</name>
    <name type="ordered locus">CGSHiEE_07250</name>
</gene>
<reference key="1">
    <citation type="journal article" date="2007" name="Genome Biol.">
        <title>Characterization and modeling of the Haemophilus influenzae core and supragenomes based on the complete genomic sequences of Rd and 12 clinical nontypeable strains.</title>
        <authorList>
            <person name="Hogg J.S."/>
            <person name="Hu F.Z."/>
            <person name="Janto B."/>
            <person name="Boissy R."/>
            <person name="Hayes J."/>
            <person name="Keefe R."/>
            <person name="Post J.C."/>
            <person name="Ehrlich G.D."/>
        </authorList>
    </citation>
    <scope>NUCLEOTIDE SEQUENCE [LARGE SCALE GENOMIC DNA]</scope>
    <source>
        <strain>PittEE</strain>
    </source>
</reference>
<organism>
    <name type="scientific">Haemophilus influenzae (strain PittEE)</name>
    <dbReference type="NCBI Taxonomy" id="374930"/>
    <lineage>
        <taxon>Bacteria</taxon>
        <taxon>Pseudomonadati</taxon>
        <taxon>Pseudomonadota</taxon>
        <taxon>Gammaproteobacteria</taxon>
        <taxon>Pasteurellales</taxon>
        <taxon>Pasteurellaceae</taxon>
        <taxon>Haemophilus</taxon>
    </lineage>
</organism>
<keyword id="KW-0067">ATP-binding</keyword>
<keyword id="KW-0238">DNA-binding</keyword>
<keyword id="KW-0479">Metal-binding</keyword>
<keyword id="KW-0547">Nucleotide-binding</keyword>
<keyword id="KW-0678">Repressor</keyword>
<keyword id="KW-0804">Transcription</keyword>
<keyword id="KW-0805">Transcription regulation</keyword>
<keyword id="KW-0862">Zinc</keyword>
<keyword id="KW-0863">Zinc-finger</keyword>
<sequence length="149" mass="17298">MRCPFCDTEETKVIDSRLVSDGYQVRRRRECGHCHERFTTFEMAELIIPKIIKTDGTREPFNEDKLRSGIQHALEKRPVSADDVEKAINHIILQLRATGEREVPSKLVGKLAMNELKKLDKVAYIRFASVYLSFDDIDQFTIEIEKLKD</sequence>
<accession>A5UDC6</accession>
<dbReference type="EMBL" id="CP000671">
    <property type="protein sequence ID" value="ABQ98777.1"/>
    <property type="molecule type" value="Genomic_DNA"/>
</dbReference>
<dbReference type="SMR" id="A5UDC6"/>
<dbReference type="KEGG" id="hip:CGSHiEE_07250"/>
<dbReference type="HOGENOM" id="CLU_108412_0_0_6"/>
<dbReference type="GO" id="GO:0005524">
    <property type="term" value="F:ATP binding"/>
    <property type="evidence" value="ECO:0007669"/>
    <property type="project" value="UniProtKB-KW"/>
</dbReference>
<dbReference type="GO" id="GO:0003677">
    <property type="term" value="F:DNA binding"/>
    <property type="evidence" value="ECO:0007669"/>
    <property type="project" value="UniProtKB-KW"/>
</dbReference>
<dbReference type="GO" id="GO:0008270">
    <property type="term" value="F:zinc ion binding"/>
    <property type="evidence" value="ECO:0007669"/>
    <property type="project" value="UniProtKB-UniRule"/>
</dbReference>
<dbReference type="GO" id="GO:0045892">
    <property type="term" value="P:negative regulation of DNA-templated transcription"/>
    <property type="evidence" value="ECO:0007669"/>
    <property type="project" value="UniProtKB-UniRule"/>
</dbReference>
<dbReference type="HAMAP" id="MF_00440">
    <property type="entry name" value="NrdR"/>
    <property type="match status" value="1"/>
</dbReference>
<dbReference type="InterPro" id="IPR005144">
    <property type="entry name" value="ATP-cone_dom"/>
</dbReference>
<dbReference type="InterPro" id="IPR055173">
    <property type="entry name" value="NrdR-like_N"/>
</dbReference>
<dbReference type="InterPro" id="IPR003796">
    <property type="entry name" value="RNR_NrdR-like"/>
</dbReference>
<dbReference type="NCBIfam" id="TIGR00244">
    <property type="entry name" value="transcriptional regulator NrdR"/>
    <property type="match status" value="1"/>
</dbReference>
<dbReference type="PANTHER" id="PTHR30455">
    <property type="entry name" value="TRANSCRIPTIONAL REPRESSOR NRDR"/>
    <property type="match status" value="1"/>
</dbReference>
<dbReference type="PANTHER" id="PTHR30455:SF2">
    <property type="entry name" value="TRANSCRIPTIONAL REPRESSOR NRDR"/>
    <property type="match status" value="1"/>
</dbReference>
<dbReference type="Pfam" id="PF03477">
    <property type="entry name" value="ATP-cone"/>
    <property type="match status" value="1"/>
</dbReference>
<dbReference type="Pfam" id="PF22811">
    <property type="entry name" value="Zn_ribbon_NrdR"/>
    <property type="match status" value="1"/>
</dbReference>
<dbReference type="PROSITE" id="PS51161">
    <property type="entry name" value="ATP_CONE"/>
    <property type="match status" value="1"/>
</dbReference>
<feature type="chain" id="PRO_1000080755" description="Transcriptional repressor NrdR">
    <location>
        <begin position="1"/>
        <end position="149"/>
    </location>
</feature>
<feature type="domain" description="ATP-cone" evidence="1">
    <location>
        <begin position="49"/>
        <end position="139"/>
    </location>
</feature>
<feature type="zinc finger region" evidence="1">
    <location>
        <begin position="3"/>
        <end position="34"/>
    </location>
</feature>
<name>NRDR_HAEIE</name>